<evidence type="ECO:0000250" key="1"/>
<evidence type="ECO:0000255" key="2"/>
<evidence type="ECO:0000305" key="3"/>
<sequence>MVMMRIFFFLFLLAFPVFTANASVNDFCVANGPGARDTPSGFVCKNTAKVTAADFVYSGLAKPGNTTNIINAAVTPAFVGQFPGVIGLGVTLARLDLAPGGVIPMHTHPGASEILNVVEGTILAAFISSGNKVYEKALYPGDVMVFPQGLLDFQEITGKIAPGLCELRQRNPGLQILEFQHCFPTIFPPKTIAGTTCLDEATIKKLKSGLGGTN</sequence>
<feature type="signal peptide" evidence="2">
    <location>
        <begin position="1"/>
        <end position="22"/>
    </location>
</feature>
<feature type="chain" id="PRO_0000010838" description="Germin-like protein">
    <location>
        <begin position="23"/>
        <end position="214"/>
    </location>
</feature>
<feature type="domain" description="Cupin type-1" evidence="2">
    <location>
        <begin position="58"/>
        <end position="204"/>
    </location>
</feature>
<feature type="binding site" evidence="1">
    <location>
        <position position="106"/>
    </location>
    <ligand>
        <name>Mn(2+)</name>
        <dbReference type="ChEBI" id="CHEBI:29035"/>
    </ligand>
</feature>
<feature type="binding site" evidence="1">
    <location>
        <position position="108"/>
    </location>
    <ligand>
        <name>Mn(2+)</name>
        <dbReference type="ChEBI" id="CHEBI:29035"/>
    </ligand>
</feature>
<feature type="binding site" evidence="1">
    <location>
        <position position="113"/>
    </location>
    <ligand>
        <name>Mn(2+)</name>
        <dbReference type="ChEBI" id="CHEBI:29035"/>
    </ligand>
</feature>
<feature type="disulfide bond" evidence="1">
    <location>
        <begin position="28"/>
        <end position="44"/>
    </location>
</feature>
<protein>
    <recommendedName>
        <fullName>Germin-like protein</fullName>
    </recommendedName>
</protein>
<comment type="subunit">
    <text evidence="1">Oligomer (believed to be a pentamer but probably hexamer).</text>
</comment>
<comment type="subcellular location">
    <subcellularLocation>
        <location evidence="1">Secreted</location>
        <location evidence="1">Extracellular space</location>
        <location evidence="1">Apoplast</location>
    </subcellularLocation>
</comment>
<comment type="tissue specificity">
    <text>Cotyledons and leaves.</text>
</comment>
<comment type="developmental stage">
    <text>Increased transiently during flower induction.</text>
</comment>
<comment type="induction">
    <text>Expressed with a circadian rhythm, with peak expression 10 hours from the beginning of the night.</text>
</comment>
<comment type="similarity">
    <text evidence="3">Belongs to the germin family.</text>
</comment>
<organism>
    <name type="scientific">Ipomoea nil</name>
    <name type="common">Japanese morning glory</name>
    <name type="synonym">Pharbitis nil</name>
    <dbReference type="NCBI Taxonomy" id="35883"/>
    <lineage>
        <taxon>Eukaryota</taxon>
        <taxon>Viridiplantae</taxon>
        <taxon>Streptophyta</taxon>
        <taxon>Embryophyta</taxon>
        <taxon>Tracheophyta</taxon>
        <taxon>Spermatophyta</taxon>
        <taxon>Magnoliopsida</taxon>
        <taxon>eudicotyledons</taxon>
        <taxon>Gunneridae</taxon>
        <taxon>Pentapetalae</taxon>
        <taxon>asterids</taxon>
        <taxon>lamiids</taxon>
        <taxon>Solanales</taxon>
        <taxon>Convolvulaceae</taxon>
        <taxon>Ipomoeeae</taxon>
        <taxon>Ipomoea</taxon>
    </lineage>
</organism>
<proteinExistence type="evidence at transcript level"/>
<reference key="1">
    <citation type="journal article" date="1996" name="Plant Cell Physiol.">
        <title>Transient increase in the level of mRNA for a germin-like protein in leaves of the short-day plant Pharbitis nil during the photoperiodic induction of flowering.</title>
        <authorList>
            <person name="Ono M."/>
            <person name="Sage-Ono K."/>
            <person name="Inoue M."/>
            <person name="Kamada H."/>
            <person name="Harada H."/>
        </authorList>
    </citation>
    <scope>NUCLEOTIDE SEQUENCE [MRNA]</scope>
    <source>
        <strain>cv. Choisy</strain>
        <tissue>Cotyledon</tissue>
    </source>
</reference>
<dbReference type="EMBL" id="D45425">
    <property type="protein sequence ID" value="BAA08266.1"/>
    <property type="molecule type" value="mRNA"/>
</dbReference>
<dbReference type="SMR" id="P45853"/>
<dbReference type="GO" id="GO:0048046">
    <property type="term" value="C:apoplast"/>
    <property type="evidence" value="ECO:0007669"/>
    <property type="project" value="UniProtKB-SubCell"/>
</dbReference>
<dbReference type="GO" id="GO:0030145">
    <property type="term" value="F:manganese ion binding"/>
    <property type="evidence" value="ECO:0007669"/>
    <property type="project" value="InterPro"/>
</dbReference>
<dbReference type="CDD" id="cd02241">
    <property type="entry name" value="cupin_OxOx"/>
    <property type="match status" value="1"/>
</dbReference>
<dbReference type="FunFam" id="2.60.120.10:FF:000047">
    <property type="entry name" value="Auxin-binding protein ABP19a"/>
    <property type="match status" value="1"/>
</dbReference>
<dbReference type="Gene3D" id="2.60.120.10">
    <property type="entry name" value="Jelly Rolls"/>
    <property type="match status" value="1"/>
</dbReference>
<dbReference type="InterPro" id="IPR006045">
    <property type="entry name" value="Cupin_1"/>
</dbReference>
<dbReference type="InterPro" id="IPR001929">
    <property type="entry name" value="Germin"/>
</dbReference>
<dbReference type="InterPro" id="IPR019780">
    <property type="entry name" value="Germin_Mn-BS"/>
</dbReference>
<dbReference type="InterPro" id="IPR014710">
    <property type="entry name" value="RmlC-like_jellyroll"/>
</dbReference>
<dbReference type="InterPro" id="IPR011051">
    <property type="entry name" value="RmlC_Cupin_sf"/>
</dbReference>
<dbReference type="PANTHER" id="PTHR31238">
    <property type="entry name" value="GERMIN-LIKE PROTEIN SUBFAMILY 3 MEMBER 3"/>
    <property type="match status" value="1"/>
</dbReference>
<dbReference type="Pfam" id="PF00190">
    <property type="entry name" value="Cupin_1"/>
    <property type="match status" value="1"/>
</dbReference>
<dbReference type="PRINTS" id="PR00325">
    <property type="entry name" value="GERMIN"/>
</dbReference>
<dbReference type="SMART" id="SM00835">
    <property type="entry name" value="Cupin_1"/>
    <property type="match status" value="1"/>
</dbReference>
<dbReference type="SUPFAM" id="SSF51182">
    <property type="entry name" value="RmlC-like cupins"/>
    <property type="match status" value="1"/>
</dbReference>
<dbReference type="PROSITE" id="PS00725">
    <property type="entry name" value="GERMIN"/>
    <property type="match status" value="1"/>
</dbReference>
<accession>P45853</accession>
<keyword id="KW-0052">Apoplast</keyword>
<keyword id="KW-1015">Disulfide bond</keyword>
<keyword id="KW-0464">Manganese</keyword>
<keyword id="KW-0479">Metal-binding</keyword>
<keyword id="KW-0964">Secreted</keyword>
<keyword id="KW-0732">Signal</keyword>
<name>GLP1_IPONI</name>
<gene>
    <name type="primary">GLP</name>
</gene>